<proteinExistence type="evidence at transcript level"/>
<organism>
    <name type="scientific">Conus pulicarius</name>
    <name type="common">Flea-bitten cone</name>
    <dbReference type="NCBI Taxonomy" id="93154"/>
    <lineage>
        <taxon>Eukaryota</taxon>
        <taxon>Metazoa</taxon>
        <taxon>Spiralia</taxon>
        <taxon>Lophotrochozoa</taxon>
        <taxon>Mollusca</taxon>
        <taxon>Gastropoda</taxon>
        <taxon>Caenogastropoda</taxon>
        <taxon>Neogastropoda</taxon>
        <taxon>Conoidea</taxon>
        <taxon>Conidae</taxon>
        <taxon>Conus</taxon>
    </lineage>
</organism>
<name>CT52_CONPL</name>
<dbReference type="EMBL" id="EF488464">
    <property type="protein sequence ID" value="ABS01336.1"/>
    <property type="molecule type" value="mRNA"/>
</dbReference>
<dbReference type="ConoServer" id="2791">
    <property type="toxin name" value="Pu5.2 precursor"/>
</dbReference>
<dbReference type="GO" id="GO:0005576">
    <property type="term" value="C:extracellular region"/>
    <property type="evidence" value="ECO:0007669"/>
    <property type="project" value="UniProtKB-SubCell"/>
</dbReference>
<dbReference type="GO" id="GO:0090729">
    <property type="term" value="F:toxin activity"/>
    <property type="evidence" value="ECO:0007669"/>
    <property type="project" value="UniProtKB-KW"/>
</dbReference>
<dbReference type="InterPro" id="IPR031565">
    <property type="entry name" value="T-conotoxin"/>
</dbReference>
<dbReference type="Pfam" id="PF16981">
    <property type="entry name" value="Chi-conotoxin"/>
    <property type="match status" value="1"/>
</dbReference>
<evidence type="ECO:0000250" key="1"/>
<evidence type="ECO:0000255" key="2"/>
<evidence type="ECO:0000303" key="3">
    <source>
    </source>
</evidence>
<evidence type="ECO:0000305" key="4"/>
<keyword id="KW-0027">Amidation</keyword>
<keyword id="KW-1015">Disulfide bond</keyword>
<keyword id="KW-0964">Secreted</keyword>
<keyword id="KW-0732">Signal</keyword>
<keyword id="KW-0800">Toxin</keyword>
<protein>
    <recommendedName>
        <fullName evidence="3">Conotoxin Pu5.2</fullName>
    </recommendedName>
</protein>
<accession>P0C637</accession>
<accession>A8RCQ6</accession>
<reference key="1">
    <citation type="journal article" date="2007" name="Peptides">
        <title>Identification of six novel T-1 conotoxins from Conus pulicarius by molecular cloning.</title>
        <authorList>
            <person name="Peng C."/>
            <person name="Wu X."/>
            <person name="Han Y."/>
            <person name="Yuan D."/>
            <person name="Chi C."/>
            <person name="Wang C."/>
        </authorList>
    </citation>
    <scope>NUCLEOTIDE SEQUENCE [MRNA]</scope>
    <source>
        <tissue>Venom duct</tissue>
    </source>
</reference>
<feature type="signal peptide" evidence="2">
    <location>
        <begin position="1"/>
        <end position="22"/>
    </location>
</feature>
<feature type="propeptide" id="PRO_0000315445" evidence="1">
    <location>
        <begin position="23"/>
        <end position="52"/>
    </location>
</feature>
<feature type="peptide" id="PRO_0000315446" description="Conotoxin Pu5.2">
    <location>
        <begin position="53"/>
        <end position="63"/>
    </location>
</feature>
<feature type="modified residue" description="Isoleucine amide" evidence="1">
    <location>
        <position position="63"/>
    </location>
</feature>
<sequence>MRCVPVFVILLLLIASTPSVDARPNPKDDVPLASFHGADNANRILRTLWNLRGCCEDKTCCFIG</sequence>
<comment type="subcellular location">
    <subcellularLocation>
        <location evidence="1">Secreted</location>
    </subcellularLocation>
</comment>
<comment type="tissue specificity">
    <text>Expressed by the venom duct.</text>
</comment>
<comment type="domain">
    <text>The cysteine framework is V (CC-CC).</text>
</comment>
<comment type="PTM">
    <text evidence="4">Contains 2 disulfide bonds that can be either 'C1-C3, C2-C4' or 'C1-C4, C2-C3', since these disulfide connectivities have been observed for conotoxins with cysteine framework V (for examples, see AC P0DQQ7 and AC P81755).</text>
</comment>
<comment type="similarity">
    <text evidence="4">Belongs to the conotoxin T superfamily.</text>
</comment>